<keyword id="KW-0963">Cytoplasm</keyword>
<keyword id="KW-0255">Endonuclease</keyword>
<keyword id="KW-0378">Hydrolase</keyword>
<keyword id="KW-0460">Magnesium</keyword>
<keyword id="KW-0479">Metal-binding</keyword>
<keyword id="KW-0540">Nuclease</keyword>
<protein>
    <recommendedName>
        <fullName evidence="1">Ribonuclease H</fullName>
        <shortName evidence="1">RNase H</shortName>
        <ecNumber evidence="1">3.1.26.4</ecNumber>
    </recommendedName>
</protein>
<proteinExistence type="inferred from homology"/>
<comment type="function">
    <text evidence="1">Endonuclease that specifically degrades the RNA of RNA-DNA hybrids.</text>
</comment>
<comment type="catalytic activity">
    <reaction evidence="1">
        <text>Endonucleolytic cleavage to 5'-phosphomonoester.</text>
        <dbReference type="EC" id="3.1.26.4"/>
    </reaction>
</comment>
<comment type="cofactor">
    <cofactor evidence="1">
        <name>Mg(2+)</name>
        <dbReference type="ChEBI" id="CHEBI:18420"/>
    </cofactor>
    <text evidence="1">Binds 1 Mg(2+) ion per subunit. May bind a second metal ion at a regulatory site, or after substrate binding.</text>
</comment>
<comment type="subunit">
    <text evidence="1">Monomer.</text>
</comment>
<comment type="subcellular location">
    <subcellularLocation>
        <location evidence="1">Cytoplasm</location>
    </subcellularLocation>
</comment>
<comment type="similarity">
    <text evidence="1">Belongs to the RNase H family.</text>
</comment>
<reference key="1">
    <citation type="journal article" date="2009" name="PLoS Genet.">
        <title>Organised genome dynamics in the Escherichia coli species results in highly diverse adaptive paths.</title>
        <authorList>
            <person name="Touchon M."/>
            <person name="Hoede C."/>
            <person name="Tenaillon O."/>
            <person name="Barbe V."/>
            <person name="Baeriswyl S."/>
            <person name="Bidet P."/>
            <person name="Bingen E."/>
            <person name="Bonacorsi S."/>
            <person name="Bouchier C."/>
            <person name="Bouvet O."/>
            <person name="Calteau A."/>
            <person name="Chiapello H."/>
            <person name="Clermont O."/>
            <person name="Cruveiller S."/>
            <person name="Danchin A."/>
            <person name="Diard M."/>
            <person name="Dossat C."/>
            <person name="Karoui M.E."/>
            <person name="Frapy E."/>
            <person name="Garry L."/>
            <person name="Ghigo J.M."/>
            <person name="Gilles A.M."/>
            <person name="Johnson J."/>
            <person name="Le Bouguenec C."/>
            <person name="Lescat M."/>
            <person name="Mangenot S."/>
            <person name="Martinez-Jehanne V."/>
            <person name="Matic I."/>
            <person name="Nassif X."/>
            <person name="Oztas S."/>
            <person name="Petit M.A."/>
            <person name="Pichon C."/>
            <person name="Rouy Z."/>
            <person name="Ruf C.S."/>
            <person name="Schneider D."/>
            <person name="Tourret J."/>
            <person name="Vacherie B."/>
            <person name="Vallenet D."/>
            <person name="Medigue C."/>
            <person name="Rocha E.P.C."/>
            <person name="Denamur E."/>
        </authorList>
    </citation>
    <scope>NUCLEOTIDE SEQUENCE [LARGE SCALE GENOMIC DNA]</scope>
    <source>
        <strain>ED1a</strain>
    </source>
</reference>
<name>RNH_ECO81</name>
<accession>B7MQ23</accession>
<dbReference type="EC" id="3.1.26.4" evidence="1"/>
<dbReference type="EMBL" id="CU928162">
    <property type="protein sequence ID" value="CAR06435.1"/>
    <property type="molecule type" value="Genomic_DNA"/>
</dbReference>
<dbReference type="RefSeq" id="WP_000917883.1">
    <property type="nucleotide sequence ID" value="NC_011745.1"/>
</dbReference>
<dbReference type="SMR" id="B7MQ23"/>
<dbReference type="GeneID" id="93777209"/>
<dbReference type="KEGG" id="ecq:ECED1_0219"/>
<dbReference type="HOGENOM" id="CLU_030894_6_0_6"/>
<dbReference type="Proteomes" id="UP000000748">
    <property type="component" value="Chromosome"/>
</dbReference>
<dbReference type="GO" id="GO:0005737">
    <property type="term" value="C:cytoplasm"/>
    <property type="evidence" value="ECO:0007669"/>
    <property type="project" value="UniProtKB-SubCell"/>
</dbReference>
<dbReference type="GO" id="GO:0000287">
    <property type="term" value="F:magnesium ion binding"/>
    <property type="evidence" value="ECO:0007669"/>
    <property type="project" value="UniProtKB-UniRule"/>
</dbReference>
<dbReference type="GO" id="GO:0003676">
    <property type="term" value="F:nucleic acid binding"/>
    <property type="evidence" value="ECO:0007669"/>
    <property type="project" value="InterPro"/>
</dbReference>
<dbReference type="GO" id="GO:0004523">
    <property type="term" value="F:RNA-DNA hybrid ribonuclease activity"/>
    <property type="evidence" value="ECO:0007669"/>
    <property type="project" value="UniProtKB-UniRule"/>
</dbReference>
<dbReference type="GO" id="GO:0043137">
    <property type="term" value="P:DNA replication, removal of RNA primer"/>
    <property type="evidence" value="ECO:0007669"/>
    <property type="project" value="TreeGrafter"/>
</dbReference>
<dbReference type="CDD" id="cd09278">
    <property type="entry name" value="RNase_HI_prokaryote_like"/>
    <property type="match status" value="1"/>
</dbReference>
<dbReference type="FunFam" id="3.30.420.10:FF:000008">
    <property type="entry name" value="Ribonuclease H"/>
    <property type="match status" value="1"/>
</dbReference>
<dbReference type="Gene3D" id="3.30.420.10">
    <property type="entry name" value="Ribonuclease H-like superfamily/Ribonuclease H"/>
    <property type="match status" value="1"/>
</dbReference>
<dbReference type="HAMAP" id="MF_00042">
    <property type="entry name" value="RNase_H"/>
    <property type="match status" value="1"/>
</dbReference>
<dbReference type="InterPro" id="IPR050092">
    <property type="entry name" value="RNase_H"/>
</dbReference>
<dbReference type="InterPro" id="IPR012337">
    <property type="entry name" value="RNaseH-like_sf"/>
</dbReference>
<dbReference type="InterPro" id="IPR002156">
    <property type="entry name" value="RNaseH_domain"/>
</dbReference>
<dbReference type="InterPro" id="IPR036397">
    <property type="entry name" value="RNaseH_sf"/>
</dbReference>
<dbReference type="InterPro" id="IPR022892">
    <property type="entry name" value="RNaseHI"/>
</dbReference>
<dbReference type="NCBIfam" id="NF001236">
    <property type="entry name" value="PRK00203.1"/>
    <property type="match status" value="1"/>
</dbReference>
<dbReference type="PANTHER" id="PTHR10642">
    <property type="entry name" value="RIBONUCLEASE H1"/>
    <property type="match status" value="1"/>
</dbReference>
<dbReference type="PANTHER" id="PTHR10642:SF26">
    <property type="entry name" value="RIBONUCLEASE H1"/>
    <property type="match status" value="1"/>
</dbReference>
<dbReference type="Pfam" id="PF00075">
    <property type="entry name" value="RNase_H"/>
    <property type="match status" value="1"/>
</dbReference>
<dbReference type="SUPFAM" id="SSF53098">
    <property type="entry name" value="Ribonuclease H-like"/>
    <property type="match status" value="1"/>
</dbReference>
<dbReference type="PROSITE" id="PS50879">
    <property type="entry name" value="RNASE_H_1"/>
    <property type="match status" value="1"/>
</dbReference>
<evidence type="ECO:0000255" key="1">
    <source>
        <dbReference type="HAMAP-Rule" id="MF_00042"/>
    </source>
</evidence>
<evidence type="ECO:0000255" key="2">
    <source>
        <dbReference type="PROSITE-ProRule" id="PRU00408"/>
    </source>
</evidence>
<sequence length="155" mass="17597">MLKQVEIFTDGSCLGNPGPGGYGAILRYRGREKTFSAGYTRTTNNRMELMAAIVALEALKEHCEVILSTDSQYVRQGITQWIHNWKKRGWKTADKKPVKNVDLWQRLDAALGQHQIKWEWVKGHAGHPENERCDELARAAAMNPTLEDTGYQVEV</sequence>
<gene>
    <name evidence="1" type="primary">rnhA</name>
    <name type="ordered locus">ECED1_0219</name>
</gene>
<organism>
    <name type="scientific">Escherichia coli O81 (strain ED1a)</name>
    <dbReference type="NCBI Taxonomy" id="585397"/>
    <lineage>
        <taxon>Bacteria</taxon>
        <taxon>Pseudomonadati</taxon>
        <taxon>Pseudomonadota</taxon>
        <taxon>Gammaproteobacteria</taxon>
        <taxon>Enterobacterales</taxon>
        <taxon>Enterobacteriaceae</taxon>
        <taxon>Escherichia</taxon>
    </lineage>
</organism>
<feature type="chain" id="PRO_1000194434" description="Ribonuclease H">
    <location>
        <begin position="1"/>
        <end position="155"/>
    </location>
</feature>
<feature type="domain" description="RNase H type-1" evidence="2">
    <location>
        <begin position="1"/>
        <end position="142"/>
    </location>
</feature>
<feature type="binding site" evidence="1">
    <location>
        <position position="10"/>
    </location>
    <ligand>
        <name>Mg(2+)</name>
        <dbReference type="ChEBI" id="CHEBI:18420"/>
        <label>1</label>
    </ligand>
</feature>
<feature type="binding site" evidence="1">
    <location>
        <position position="10"/>
    </location>
    <ligand>
        <name>Mg(2+)</name>
        <dbReference type="ChEBI" id="CHEBI:18420"/>
        <label>2</label>
    </ligand>
</feature>
<feature type="binding site" evidence="1">
    <location>
        <position position="48"/>
    </location>
    <ligand>
        <name>Mg(2+)</name>
        <dbReference type="ChEBI" id="CHEBI:18420"/>
        <label>1</label>
    </ligand>
</feature>
<feature type="binding site" evidence="1">
    <location>
        <position position="70"/>
    </location>
    <ligand>
        <name>Mg(2+)</name>
        <dbReference type="ChEBI" id="CHEBI:18420"/>
        <label>1</label>
    </ligand>
</feature>
<feature type="binding site" evidence="1">
    <location>
        <position position="134"/>
    </location>
    <ligand>
        <name>Mg(2+)</name>
        <dbReference type="ChEBI" id="CHEBI:18420"/>
        <label>2</label>
    </ligand>
</feature>